<comment type="function">
    <text evidence="1">Can catalyze the hydrolysis of ATP in the presence of single-stranded DNA, the ATP-dependent uptake of single-stranded DNA by duplex DNA, and the ATP-dependent hybridization of homologous single-stranded DNAs. It interacts with LexA causing its activation and leading to its autocatalytic cleavage.</text>
</comment>
<comment type="subcellular location">
    <subcellularLocation>
        <location evidence="1">Cytoplasm</location>
    </subcellularLocation>
</comment>
<comment type="similarity">
    <text evidence="1">Belongs to the RecA family.</text>
</comment>
<feature type="chain" id="PRO_0000122834" description="Protein RecA">
    <location>
        <begin position="1"/>
        <end position="347"/>
    </location>
</feature>
<feature type="binding site" evidence="1">
    <location>
        <begin position="70"/>
        <end position="77"/>
    </location>
    <ligand>
        <name>ATP</name>
        <dbReference type="ChEBI" id="CHEBI:30616"/>
    </ligand>
</feature>
<accession>Q5LRU0</accession>
<sequence length="347" mass="37286">MSSKQSADKQKALDSALAQIERQFGKGSIMRLGGENAIQEIEASSTGSLGLDIALGIGGLPMGRIVEIYGPESSGKTTLTLHCIAEQQKRGGVCAFVDAEHALDPQYARKLGVDLDELLISQPDTGEQALEITDTLVRSGAVNMVVVDSVAALTPKSELEGDMGDSSVGVHARLMSQAMRKLTGSISRSKCMVIFINQIRMKIGVMFGSPETTTGGNALKFYSSVRLDIRRIGAIKDRDEVVGNATRVKVVKNKVAPPFKQVEFDIMYGEGISKTGELLDLGVKAGVVDKSGSWFSYGDERIGQGRENAKTFLRENQSIALAIEDKIRAAHGLEFDMSDDGEDILEA</sequence>
<organism>
    <name type="scientific">Ruegeria pomeroyi (strain ATCC 700808 / DSM 15171 / DSS-3)</name>
    <name type="common">Silicibacter pomeroyi</name>
    <dbReference type="NCBI Taxonomy" id="246200"/>
    <lineage>
        <taxon>Bacteria</taxon>
        <taxon>Pseudomonadati</taxon>
        <taxon>Pseudomonadota</taxon>
        <taxon>Alphaproteobacteria</taxon>
        <taxon>Rhodobacterales</taxon>
        <taxon>Roseobacteraceae</taxon>
        <taxon>Ruegeria</taxon>
    </lineage>
</organism>
<gene>
    <name evidence="1" type="primary">recA</name>
    <name type="ordered locus">SPO2034</name>
</gene>
<keyword id="KW-0067">ATP-binding</keyword>
<keyword id="KW-0963">Cytoplasm</keyword>
<keyword id="KW-0227">DNA damage</keyword>
<keyword id="KW-0233">DNA recombination</keyword>
<keyword id="KW-0234">DNA repair</keyword>
<keyword id="KW-0238">DNA-binding</keyword>
<keyword id="KW-0547">Nucleotide-binding</keyword>
<keyword id="KW-1185">Reference proteome</keyword>
<keyword id="KW-0742">SOS response</keyword>
<reference key="1">
    <citation type="journal article" date="2004" name="Nature">
        <title>Genome sequence of Silicibacter pomeroyi reveals adaptations to the marine environment.</title>
        <authorList>
            <person name="Moran M.A."/>
            <person name="Buchan A."/>
            <person name="Gonzalez J.M."/>
            <person name="Heidelberg J.F."/>
            <person name="Whitman W.B."/>
            <person name="Kiene R.P."/>
            <person name="Henriksen J.R."/>
            <person name="King G.M."/>
            <person name="Belas R."/>
            <person name="Fuqua C."/>
            <person name="Brinkac L.M."/>
            <person name="Lewis M."/>
            <person name="Johri S."/>
            <person name="Weaver B."/>
            <person name="Pai G."/>
            <person name="Eisen J.A."/>
            <person name="Rahe E."/>
            <person name="Sheldon W.M."/>
            <person name="Ye W."/>
            <person name="Miller T.R."/>
            <person name="Carlton J."/>
            <person name="Rasko D.A."/>
            <person name="Paulsen I.T."/>
            <person name="Ren Q."/>
            <person name="Daugherty S.C."/>
            <person name="DeBoy R.T."/>
            <person name="Dodson R.J."/>
            <person name="Durkin A.S."/>
            <person name="Madupu R."/>
            <person name="Nelson W.C."/>
            <person name="Sullivan S.A."/>
            <person name="Rosovitz M.J."/>
            <person name="Haft D.H."/>
            <person name="Selengut J."/>
            <person name="Ward N."/>
        </authorList>
    </citation>
    <scope>NUCLEOTIDE SEQUENCE [LARGE SCALE GENOMIC DNA]</scope>
    <source>
        <strain>ATCC 700808 / DSM 15171 / DSS-3</strain>
    </source>
</reference>
<reference key="2">
    <citation type="journal article" date="2014" name="Stand. Genomic Sci.">
        <title>An updated genome annotation for the model marine bacterium Ruegeria pomeroyi DSS-3.</title>
        <authorList>
            <person name="Rivers A.R."/>
            <person name="Smith C.B."/>
            <person name="Moran M.A."/>
        </authorList>
    </citation>
    <scope>GENOME REANNOTATION</scope>
    <source>
        <strain>ATCC 700808 / DSM 15171 / DSS-3</strain>
    </source>
</reference>
<dbReference type="EMBL" id="CP000031">
    <property type="protein sequence ID" value="AAV95306.1"/>
    <property type="molecule type" value="Genomic_DNA"/>
</dbReference>
<dbReference type="SMR" id="Q5LRU0"/>
<dbReference type="STRING" id="246200.SPO2034"/>
<dbReference type="PaxDb" id="246200-SPO2034"/>
<dbReference type="KEGG" id="sil:SPO2034"/>
<dbReference type="eggNOG" id="COG0468">
    <property type="taxonomic scope" value="Bacteria"/>
</dbReference>
<dbReference type="HOGENOM" id="CLU_040469_1_2_5"/>
<dbReference type="Proteomes" id="UP000001023">
    <property type="component" value="Chromosome"/>
</dbReference>
<dbReference type="GO" id="GO:0005829">
    <property type="term" value="C:cytosol"/>
    <property type="evidence" value="ECO:0007669"/>
    <property type="project" value="TreeGrafter"/>
</dbReference>
<dbReference type="GO" id="GO:0005524">
    <property type="term" value="F:ATP binding"/>
    <property type="evidence" value="ECO:0007669"/>
    <property type="project" value="UniProtKB-UniRule"/>
</dbReference>
<dbReference type="GO" id="GO:0016887">
    <property type="term" value="F:ATP hydrolysis activity"/>
    <property type="evidence" value="ECO:0007669"/>
    <property type="project" value="InterPro"/>
</dbReference>
<dbReference type="GO" id="GO:0140664">
    <property type="term" value="F:ATP-dependent DNA damage sensor activity"/>
    <property type="evidence" value="ECO:0007669"/>
    <property type="project" value="InterPro"/>
</dbReference>
<dbReference type="GO" id="GO:0003684">
    <property type="term" value="F:damaged DNA binding"/>
    <property type="evidence" value="ECO:0007669"/>
    <property type="project" value="UniProtKB-UniRule"/>
</dbReference>
<dbReference type="GO" id="GO:0003697">
    <property type="term" value="F:single-stranded DNA binding"/>
    <property type="evidence" value="ECO:0007669"/>
    <property type="project" value="UniProtKB-UniRule"/>
</dbReference>
<dbReference type="GO" id="GO:0006310">
    <property type="term" value="P:DNA recombination"/>
    <property type="evidence" value="ECO:0007669"/>
    <property type="project" value="UniProtKB-UniRule"/>
</dbReference>
<dbReference type="GO" id="GO:0006281">
    <property type="term" value="P:DNA repair"/>
    <property type="evidence" value="ECO:0007669"/>
    <property type="project" value="UniProtKB-UniRule"/>
</dbReference>
<dbReference type="GO" id="GO:0009432">
    <property type="term" value="P:SOS response"/>
    <property type="evidence" value="ECO:0007669"/>
    <property type="project" value="UniProtKB-UniRule"/>
</dbReference>
<dbReference type="CDD" id="cd00983">
    <property type="entry name" value="RecA"/>
    <property type="match status" value="1"/>
</dbReference>
<dbReference type="FunFam" id="3.40.50.300:FF:000087">
    <property type="entry name" value="Recombinase RecA"/>
    <property type="match status" value="1"/>
</dbReference>
<dbReference type="Gene3D" id="3.40.50.300">
    <property type="entry name" value="P-loop containing nucleotide triphosphate hydrolases"/>
    <property type="match status" value="1"/>
</dbReference>
<dbReference type="HAMAP" id="MF_00268">
    <property type="entry name" value="RecA"/>
    <property type="match status" value="1"/>
</dbReference>
<dbReference type="InterPro" id="IPR003593">
    <property type="entry name" value="AAA+_ATPase"/>
</dbReference>
<dbReference type="InterPro" id="IPR013765">
    <property type="entry name" value="DNA_recomb/repair_RecA"/>
</dbReference>
<dbReference type="InterPro" id="IPR020584">
    <property type="entry name" value="DNA_recomb/repair_RecA_CS"/>
</dbReference>
<dbReference type="InterPro" id="IPR027417">
    <property type="entry name" value="P-loop_NTPase"/>
</dbReference>
<dbReference type="InterPro" id="IPR049261">
    <property type="entry name" value="RecA-like_C"/>
</dbReference>
<dbReference type="InterPro" id="IPR049428">
    <property type="entry name" value="RecA-like_N"/>
</dbReference>
<dbReference type="InterPro" id="IPR020588">
    <property type="entry name" value="RecA_ATP-bd"/>
</dbReference>
<dbReference type="InterPro" id="IPR023400">
    <property type="entry name" value="RecA_C_sf"/>
</dbReference>
<dbReference type="InterPro" id="IPR020587">
    <property type="entry name" value="RecA_monomer-monomer_interface"/>
</dbReference>
<dbReference type="NCBIfam" id="TIGR02012">
    <property type="entry name" value="tigrfam_recA"/>
    <property type="match status" value="1"/>
</dbReference>
<dbReference type="PANTHER" id="PTHR45900:SF1">
    <property type="entry name" value="MITOCHONDRIAL DNA REPAIR PROTEIN RECA HOMOLOG-RELATED"/>
    <property type="match status" value="1"/>
</dbReference>
<dbReference type="PANTHER" id="PTHR45900">
    <property type="entry name" value="RECA"/>
    <property type="match status" value="1"/>
</dbReference>
<dbReference type="Pfam" id="PF00154">
    <property type="entry name" value="RecA"/>
    <property type="match status" value="1"/>
</dbReference>
<dbReference type="Pfam" id="PF21096">
    <property type="entry name" value="RecA_C"/>
    <property type="match status" value="1"/>
</dbReference>
<dbReference type="PRINTS" id="PR00142">
    <property type="entry name" value="RECA"/>
</dbReference>
<dbReference type="SMART" id="SM00382">
    <property type="entry name" value="AAA"/>
    <property type="match status" value="1"/>
</dbReference>
<dbReference type="SUPFAM" id="SSF52540">
    <property type="entry name" value="P-loop containing nucleoside triphosphate hydrolases"/>
    <property type="match status" value="1"/>
</dbReference>
<dbReference type="SUPFAM" id="SSF54752">
    <property type="entry name" value="RecA protein, C-terminal domain"/>
    <property type="match status" value="1"/>
</dbReference>
<dbReference type="PROSITE" id="PS00321">
    <property type="entry name" value="RECA_1"/>
    <property type="match status" value="1"/>
</dbReference>
<dbReference type="PROSITE" id="PS50162">
    <property type="entry name" value="RECA_2"/>
    <property type="match status" value="1"/>
</dbReference>
<dbReference type="PROSITE" id="PS50163">
    <property type="entry name" value="RECA_3"/>
    <property type="match status" value="1"/>
</dbReference>
<protein>
    <recommendedName>
        <fullName evidence="1">Protein RecA</fullName>
    </recommendedName>
    <alternativeName>
        <fullName evidence="1">Recombinase A</fullName>
    </alternativeName>
</protein>
<proteinExistence type="inferred from homology"/>
<evidence type="ECO:0000255" key="1">
    <source>
        <dbReference type="HAMAP-Rule" id="MF_00268"/>
    </source>
</evidence>
<name>RECA_RUEPO</name>